<accession>Q9HNM7</accession>
<reference key="1">
    <citation type="journal article" date="2000" name="Proc. Natl. Acad. Sci. U.S.A.">
        <title>Genome sequence of Halobacterium species NRC-1.</title>
        <authorList>
            <person name="Ng W.V."/>
            <person name="Kennedy S.P."/>
            <person name="Mahairas G.G."/>
            <person name="Berquist B."/>
            <person name="Pan M."/>
            <person name="Shukla H.D."/>
            <person name="Lasky S.R."/>
            <person name="Baliga N.S."/>
            <person name="Thorsson V."/>
            <person name="Sbrogna J."/>
            <person name="Swartzell S."/>
            <person name="Weir D."/>
            <person name="Hall J."/>
            <person name="Dahl T.A."/>
            <person name="Welti R."/>
            <person name="Goo Y.A."/>
            <person name="Leithauser B."/>
            <person name="Keller K."/>
            <person name="Cruz R."/>
            <person name="Danson M.J."/>
            <person name="Hough D.W."/>
            <person name="Maddocks D.G."/>
            <person name="Jablonski P.E."/>
            <person name="Krebs M.P."/>
            <person name="Angevine C.M."/>
            <person name="Dale H."/>
            <person name="Isenbarger T.A."/>
            <person name="Peck R.F."/>
            <person name="Pohlschroder M."/>
            <person name="Spudich J.L."/>
            <person name="Jung K.-H."/>
            <person name="Alam M."/>
            <person name="Freitas T."/>
            <person name="Hou S."/>
            <person name="Daniels C.J."/>
            <person name="Dennis P.P."/>
            <person name="Omer A.D."/>
            <person name="Ebhardt H."/>
            <person name="Lowe T.M."/>
            <person name="Liang P."/>
            <person name="Riley M."/>
            <person name="Hood L."/>
            <person name="DasSarma S."/>
        </authorList>
    </citation>
    <scope>NUCLEOTIDE SEQUENCE [LARGE SCALE GENOMIC DNA]</scope>
    <source>
        <strain>ATCC 700922 / JCM 11081 / NRC-1</strain>
    </source>
</reference>
<protein>
    <recommendedName>
        <fullName evidence="1">NH(3)-dependent NAD(+) synthetase</fullName>
        <ecNumber evidence="1">6.3.1.5</ecNumber>
    </recommendedName>
</protein>
<sequence>MSAPDTVSPLDLRFSAAELAERRDRIQSFIRDTVAAAGAERCVLGLSGGIDSTTVAHLTVDELGADALHGLVMPGAVSRDQNMSDAERVAEDLGIEYDVVEIDPFVTQLTDVFPDAAGDEVAVGNARARTRAVINYFVANHGDGVVLGTGNRAEAMTGYYTKYGDQAVDCNPIGNLYKMQVRQLARDLGVPEDLVTKAPTAELWADQTDAGELGVDYDTIDAVLAVHVDGGLPASATATHLDIDPSVVETVRDLYGASKHKRAMPPAP</sequence>
<proteinExistence type="inferred from homology"/>
<organism>
    <name type="scientific">Halobacterium salinarum (strain ATCC 700922 / JCM 11081 / NRC-1)</name>
    <name type="common">Halobacterium halobium</name>
    <dbReference type="NCBI Taxonomy" id="64091"/>
    <lineage>
        <taxon>Archaea</taxon>
        <taxon>Methanobacteriati</taxon>
        <taxon>Methanobacteriota</taxon>
        <taxon>Stenosarchaea group</taxon>
        <taxon>Halobacteria</taxon>
        <taxon>Halobacteriales</taxon>
        <taxon>Halobacteriaceae</taxon>
        <taxon>Halobacterium</taxon>
        <taxon>Halobacterium salinarum NRC-34001</taxon>
    </lineage>
</organism>
<dbReference type="EC" id="6.3.1.5" evidence="1"/>
<dbReference type="EMBL" id="AE004437">
    <property type="protein sequence ID" value="AAG20193.1"/>
    <property type="molecule type" value="Genomic_DNA"/>
</dbReference>
<dbReference type="PIR" id="E84353">
    <property type="entry name" value="E84353"/>
</dbReference>
<dbReference type="RefSeq" id="WP_010903494.1">
    <property type="nucleotide sequence ID" value="NC_002607.1"/>
</dbReference>
<dbReference type="SMR" id="Q9HNM7"/>
<dbReference type="FunCoup" id="Q9HNM7">
    <property type="interactions" value="69"/>
</dbReference>
<dbReference type="STRING" id="64091.VNG_2031G"/>
<dbReference type="PaxDb" id="64091-VNG_2031G"/>
<dbReference type="KEGG" id="hal:VNG_2031G"/>
<dbReference type="PATRIC" id="fig|64091.14.peg.1551"/>
<dbReference type="HOGENOM" id="CLU_059327_1_1_2"/>
<dbReference type="InParanoid" id="Q9HNM7"/>
<dbReference type="OrthoDB" id="39312at2157"/>
<dbReference type="PhylomeDB" id="Q9HNM7"/>
<dbReference type="UniPathway" id="UPA00253">
    <property type="reaction ID" value="UER00333"/>
</dbReference>
<dbReference type="Proteomes" id="UP000000554">
    <property type="component" value="Chromosome"/>
</dbReference>
<dbReference type="GO" id="GO:0005737">
    <property type="term" value="C:cytoplasm"/>
    <property type="evidence" value="ECO:0007669"/>
    <property type="project" value="InterPro"/>
</dbReference>
<dbReference type="GO" id="GO:0005524">
    <property type="term" value="F:ATP binding"/>
    <property type="evidence" value="ECO:0007669"/>
    <property type="project" value="UniProtKB-UniRule"/>
</dbReference>
<dbReference type="GO" id="GO:0004359">
    <property type="term" value="F:glutaminase activity"/>
    <property type="evidence" value="ECO:0007669"/>
    <property type="project" value="InterPro"/>
</dbReference>
<dbReference type="GO" id="GO:0046872">
    <property type="term" value="F:metal ion binding"/>
    <property type="evidence" value="ECO:0007669"/>
    <property type="project" value="UniProtKB-KW"/>
</dbReference>
<dbReference type="GO" id="GO:0003952">
    <property type="term" value="F:NAD+ synthase (glutamine-hydrolyzing) activity"/>
    <property type="evidence" value="ECO:0007669"/>
    <property type="project" value="InterPro"/>
</dbReference>
<dbReference type="GO" id="GO:0008795">
    <property type="term" value="F:NAD+ synthase activity"/>
    <property type="evidence" value="ECO:0007669"/>
    <property type="project" value="UniProtKB-UniRule"/>
</dbReference>
<dbReference type="GO" id="GO:0009435">
    <property type="term" value="P:NAD biosynthetic process"/>
    <property type="evidence" value="ECO:0007669"/>
    <property type="project" value="UniProtKB-UniRule"/>
</dbReference>
<dbReference type="CDD" id="cd00553">
    <property type="entry name" value="NAD_synthase"/>
    <property type="match status" value="1"/>
</dbReference>
<dbReference type="FunFam" id="3.40.50.620:FF:000106">
    <property type="entry name" value="Glutamine-dependent NAD(+) synthetase"/>
    <property type="match status" value="1"/>
</dbReference>
<dbReference type="Gene3D" id="3.40.50.620">
    <property type="entry name" value="HUPs"/>
    <property type="match status" value="1"/>
</dbReference>
<dbReference type="HAMAP" id="MF_00193">
    <property type="entry name" value="NadE_ammonia_dep"/>
    <property type="match status" value="1"/>
</dbReference>
<dbReference type="InterPro" id="IPR022310">
    <property type="entry name" value="NAD/GMP_synthase"/>
</dbReference>
<dbReference type="InterPro" id="IPR003694">
    <property type="entry name" value="NAD_synthase"/>
</dbReference>
<dbReference type="InterPro" id="IPR022926">
    <property type="entry name" value="NH(3)-dep_NAD(+)_synth"/>
</dbReference>
<dbReference type="InterPro" id="IPR014729">
    <property type="entry name" value="Rossmann-like_a/b/a_fold"/>
</dbReference>
<dbReference type="NCBIfam" id="TIGR00552">
    <property type="entry name" value="nadE"/>
    <property type="match status" value="1"/>
</dbReference>
<dbReference type="NCBIfam" id="NF010587">
    <property type="entry name" value="PRK13980.1"/>
    <property type="match status" value="1"/>
</dbReference>
<dbReference type="PANTHER" id="PTHR23090:SF9">
    <property type="entry name" value="GLUTAMINE-DEPENDENT NAD(+) SYNTHETASE"/>
    <property type="match status" value="1"/>
</dbReference>
<dbReference type="PANTHER" id="PTHR23090">
    <property type="entry name" value="NH 3 /GLUTAMINE-DEPENDENT NAD + SYNTHETASE"/>
    <property type="match status" value="1"/>
</dbReference>
<dbReference type="Pfam" id="PF02540">
    <property type="entry name" value="NAD_synthase"/>
    <property type="match status" value="1"/>
</dbReference>
<dbReference type="SUPFAM" id="SSF52402">
    <property type="entry name" value="Adenine nucleotide alpha hydrolases-like"/>
    <property type="match status" value="1"/>
</dbReference>
<keyword id="KW-0067">ATP-binding</keyword>
<keyword id="KW-0436">Ligase</keyword>
<keyword id="KW-0460">Magnesium</keyword>
<keyword id="KW-0479">Metal-binding</keyword>
<keyword id="KW-0520">NAD</keyword>
<keyword id="KW-0547">Nucleotide-binding</keyword>
<keyword id="KW-1185">Reference proteome</keyword>
<feature type="chain" id="PRO_0000152222" description="NH(3)-dependent NAD(+) synthetase">
    <location>
        <begin position="1"/>
        <end position="268"/>
    </location>
</feature>
<feature type="binding site" evidence="1">
    <location>
        <begin position="45"/>
        <end position="52"/>
    </location>
    <ligand>
        <name>ATP</name>
        <dbReference type="ChEBI" id="CHEBI:30616"/>
    </ligand>
</feature>
<feature type="binding site" evidence="1">
    <location>
        <position position="51"/>
    </location>
    <ligand>
        <name>Mg(2+)</name>
        <dbReference type="ChEBI" id="CHEBI:18420"/>
    </ligand>
</feature>
<feature type="binding site" evidence="1">
    <location>
        <position position="129"/>
    </location>
    <ligand>
        <name>deamido-NAD(+)</name>
        <dbReference type="ChEBI" id="CHEBI:58437"/>
    </ligand>
</feature>
<feature type="binding site" evidence="1">
    <location>
        <position position="149"/>
    </location>
    <ligand>
        <name>ATP</name>
        <dbReference type="ChEBI" id="CHEBI:30616"/>
    </ligand>
</feature>
<feature type="binding site" evidence="1">
    <location>
        <position position="154"/>
    </location>
    <ligand>
        <name>Mg(2+)</name>
        <dbReference type="ChEBI" id="CHEBI:18420"/>
    </ligand>
</feature>
<feature type="binding site" evidence="1">
    <location>
        <position position="162"/>
    </location>
    <ligand>
        <name>deamido-NAD(+)</name>
        <dbReference type="ChEBI" id="CHEBI:58437"/>
    </ligand>
</feature>
<feature type="binding site" evidence="1">
    <location>
        <position position="169"/>
    </location>
    <ligand>
        <name>deamido-NAD(+)</name>
        <dbReference type="ChEBI" id="CHEBI:58437"/>
    </ligand>
</feature>
<feature type="binding site" evidence="1">
    <location>
        <position position="178"/>
    </location>
    <ligand>
        <name>ATP</name>
        <dbReference type="ChEBI" id="CHEBI:30616"/>
    </ligand>
</feature>
<feature type="binding site" evidence="1">
    <location>
        <position position="200"/>
    </location>
    <ligand>
        <name>ATP</name>
        <dbReference type="ChEBI" id="CHEBI:30616"/>
    </ligand>
</feature>
<feature type="binding site" evidence="1">
    <location>
        <begin position="260"/>
        <end position="261"/>
    </location>
    <ligand>
        <name>deamido-NAD(+)</name>
        <dbReference type="ChEBI" id="CHEBI:58437"/>
    </ligand>
</feature>
<evidence type="ECO:0000255" key="1">
    <source>
        <dbReference type="HAMAP-Rule" id="MF_00193"/>
    </source>
</evidence>
<name>NADE_HALSA</name>
<comment type="function">
    <text evidence="1">Catalyzes the ATP-dependent amidation of deamido-NAD to form NAD. Uses ammonia as a nitrogen source.</text>
</comment>
<comment type="catalytic activity">
    <reaction evidence="1">
        <text>deamido-NAD(+) + NH4(+) + ATP = AMP + diphosphate + NAD(+) + H(+)</text>
        <dbReference type="Rhea" id="RHEA:21188"/>
        <dbReference type="ChEBI" id="CHEBI:15378"/>
        <dbReference type="ChEBI" id="CHEBI:28938"/>
        <dbReference type="ChEBI" id="CHEBI:30616"/>
        <dbReference type="ChEBI" id="CHEBI:33019"/>
        <dbReference type="ChEBI" id="CHEBI:57540"/>
        <dbReference type="ChEBI" id="CHEBI:58437"/>
        <dbReference type="ChEBI" id="CHEBI:456215"/>
        <dbReference type="EC" id="6.3.1.5"/>
    </reaction>
</comment>
<comment type="pathway">
    <text evidence="1">Cofactor biosynthesis; NAD(+) biosynthesis; NAD(+) from deamido-NAD(+) (ammonia route): step 1/1.</text>
</comment>
<comment type="subunit">
    <text evidence="1">Homodimer.</text>
</comment>
<comment type="similarity">
    <text evidence="1">Belongs to the NAD synthetase family.</text>
</comment>
<gene>
    <name evidence="1" type="primary">nadE</name>
    <name type="ordered locus">VNG_2031G</name>
</gene>